<dbReference type="EC" id="1.8.-.-" evidence="6"/>
<dbReference type="EMBL" id="KN818402">
    <property type="protein sequence ID" value="KIL56733.1"/>
    <property type="molecule type" value="Genomic_DNA"/>
</dbReference>
<dbReference type="SMR" id="A0A0C2WKN2"/>
<dbReference type="FunCoup" id="A0A0C2WKN2">
    <property type="interactions" value="34"/>
</dbReference>
<dbReference type="STRING" id="946122.A0A0C2WKN2"/>
<dbReference type="GlyCosmos" id="A0A0C2WKN2">
    <property type="glycosylation" value="6 sites, No reported glycans"/>
</dbReference>
<dbReference type="HOGENOM" id="CLU_006909_5_2_1"/>
<dbReference type="InParanoid" id="A0A0C2WKN2"/>
<dbReference type="OrthoDB" id="66881at2759"/>
<dbReference type="BioCyc" id="MetaCyc:MONOMER-21261"/>
<dbReference type="Proteomes" id="UP000054549">
    <property type="component" value="Unassembled WGS sequence"/>
</dbReference>
<dbReference type="GO" id="GO:0050660">
    <property type="term" value="F:flavin adenine dinucleotide binding"/>
    <property type="evidence" value="ECO:0007669"/>
    <property type="project" value="InterPro"/>
</dbReference>
<dbReference type="GO" id="GO:0004499">
    <property type="term" value="F:N,N-dimethylaniline monooxygenase activity"/>
    <property type="evidence" value="ECO:0007669"/>
    <property type="project" value="InterPro"/>
</dbReference>
<dbReference type="GO" id="GO:0050661">
    <property type="term" value="F:NADP binding"/>
    <property type="evidence" value="ECO:0007669"/>
    <property type="project" value="InterPro"/>
</dbReference>
<dbReference type="Gene3D" id="3.50.50.60">
    <property type="entry name" value="FAD/NAD(P)-binding domain"/>
    <property type="match status" value="2"/>
</dbReference>
<dbReference type="InterPro" id="IPR036188">
    <property type="entry name" value="FAD/NAD-bd_sf"/>
</dbReference>
<dbReference type="InterPro" id="IPR020946">
    <property type="entry name" value="Flavin_mOase-like"/>
</dbReference>
<dbReference type="InterPro" id="IPR050346">
    <property type="entry name" value="FMO-like"/>
</dbReference>
<dbReference type="PANTHER" id="PTHR23023">
    <property type="entry name" value="DIMETHYLANILINE MONOOXYGENASE"/>
    <property type="match status" value="1"/>
</dbReference>
<dbReference type="Pfam" id="PF00743">
    <property type="entry name" value="FMO-like"/>
    <property type="match status" value="1"/>
</dbReference>
<dbReference type="Pfam" id="PF13450">
    <property type="entry name" value="NAD_binding_8"/>
    <property type="match status" value="1"/>
</dbReference>
<dbReference type="PRINTS" id="PR00419">
    <property type="entry name" value="ADXRDTASE"/>
</dbReference>
<dbReference type="SUPFAM" id="SSF51905">
    <property type="entry name" value="FAD/NAD(P)-binding domain"/>
    <property type="match status" value="1"/>
</dbReference>
<name>IBOF_AMAMK</name>
<protein>
    <recommendedName>
        <fullName evidence="4">Flavin-containing monooxygenase iboF</fullName>
        <ecNumber evidence="6">1.8.-.-</ecNumber>
    </recommendedName>
    <alternativeName>
        <fullName evidence="4">Ibotenic acid biosynthesis cluster protein F</fullName>
    </alternativeName>
</protein>
<comment type="function">
    <text evidence="3 6">Flavin-containing monooxygenase; part of the gene cluster that mediates the biosynthesis of the psychoactive metabolites ibotenic acid and muscimol (PubMed:32233056). The first committed step is glutamate hydroxylation by the 2-oxoglutarate-dependent dioxygenase iboH, and the last step is decarboxylation of ibotenic acid to muscimol by the decarboxylase iboD (PubMed:32233056). The order of the intermediate reactions is somewhat ambiguous (Probable). IboA likely activates the carboxylic acid at position 5 to introduce an amide bond, and the flavin monooxygenase iboF generates the N-O bond (Probable). There are several options for the latter step (Probable). One option is that iboF directly hydroxylates the amide nitrogen formed by iboA to produce a hydroxamic acid species (Probable). Another option is that iboF hydroxylates an external N-containing compound, whose resulting N-O bond is subsequently introduced into the hydroxyglutamate scaffold (Probable). The paralogous PLP-dependent cystathionine gamma-synthase-like enzymes iboG1 and iboG2 are likely involved in substitution of the OH group at position 3 by the O-N moiety (Probable). The first cyclic intermediate is most probably tricholomic acid which is likely desaturated to ibotenic acid by the cytochrome P450 monooxygenase iboC (Probable).</text>
</comment>
<comment type="cofactor">
    <cofactor evidence="1">
        <name>FAD</name>
        <dbReference type="ChEBI" id="CHEBI:57692"/>
    </cofactor>
</comment>
<comment type="pathway">
    <text evidence="6">Secondary metabolite biosynthesis.</text>
</comment>
<comment type="induction">
    <text evidence="3">Expression is highly induced during artificial growth in symbiosis with Populus, which is close to its natural condition.</text>
</comment>
<comment type="similarity">
    <text evidence="5">Belongs to the FMO family.</text>
</comment>
<accession>A0A0C2WKN2</accession>
<reference key="1">
    <citation type="journal article" date="2015" name="Nat. Genet.">
        <title>Convergent losses of decay mechanisms and rapid turnover of symbiosis genes in mycorrhizal mutualists.</title>
        <authorList>
            <consortium name="Mycorrhizal Genomics Initiative Consortium"/>
            <person name="Kohler A."/>
            <person name="Kuo A."/>
            <person name="Nagy L.G."/>
            <person name="Morin E."/>
            <person name="Barry K.W."/>
            <person name="Buscot F."/>
            <person name="Canbaeck B."/>
            <person name="Choi C."/>
            <person name="Cichocki N."/>
            <person name="Clum A."/>
            <person name="Colpaert J."/>
            <person name="Copeland A."/>
            <person name="Costa M.D."/>
            <person name="Dore J."/>
            <person name="Floudas D."/>
            <person name="Gay G."/>
            <person name="Girlanda M."/>
            <person name="Henrissat B."/>
            <person name="Herrmann S."/>
            <person name="Hess J."/>
            <person name="Hoegberg N."/>
            <person name="Johansson T."/>
            <person name="Khouja H.R."/>
            <person name="LaButti K."/>
            <person name="Lahrmann U."/>
            <person name="Levasseur A."/>
            <person name="Lindquist E.A."/>
            <person name="Lipzen A."/>
            <person name="Marmeisse R."/>
            <person name="Martino E."/>
            <person name="Murat C."/>
            <person name="Ngan C.Y."/>
            <person name="Nehls U."/>
            <person name="Plett J.M."/>
            <person name="Pringle A."/>
            <person name="Ohm R.A."/>
            <person name="Perotto S."/>
            <person name="Peter M."/>
            <person name="Riley R."/>
            <person name="Rineau F."/>
            <person name="Ruytinx J."/>
            <person name="Salamov A."/>
            <person name="Shah F."/>
            <person name="Sun H."/>
            <person name="Tarkka M."/>
            <person name="Tritt A."/>
            <person name="Veneault-Fourrey C."/>
            <person name="Zuccaro A."/>
            <person name="Tunlid A."/>
            <person name="Grigoriev I.V."/>
            <person name="Hibbett D.S."/>
            <person name="Martin F."/>
        </authorList>
    </citation>
    <scope>NUCLEOTIDE SEQUENCE [LARGE SCALE GENOMIC DNA]</scope>
    <source>
        <strain>Koide BX008</strain>
    </source>
</reference>
<reference key="2">
    <citation type="journal article" date="2020" name="Angew. Chem. Int. Ed.">
        <title>Ibotenic acid biosynthesis in the fly agaric is initiated by glutamate hydroxylation.</title>
        <authorList>
            <person name="Obermaier S."/>
            <person name="Mueller M."/>
        </authorList>
    </citation>
    <scope>FUNCTION</scope>
    <scope>INDUCTION</scope>
    <scope>PATHWAY</scope>
</reference>
<sequence>MFSLRPTALVSLSVVLFSIQETLSEQQPFVSPGWSDQWWHKSELESYTFPWPIQKVAIIGAGPSGLAAYHELDKAGYDVYLFERDTVPGGNWHYTDETPVKEPIPNADVSIGDFVPSLPPEGVRLPYEEHYEGNVSDELLRAHRGPKPIWNSLQTNAPPPLQQFRDHPWPADQPWLLPHAVLGKYIRAFASFNGINSNDVENPHISYNTRVELVEKCFTSTENGPMRTGWTLTLKQVSRTGTNTSKAVWTKENFDAVVVATGRFNAPYIPNILGLKAWADRFPDRIVHSRQFRRPQLYTNQTVLVVGAAASGVEIATDIAPNARAVYLSIRPRRISNSNSAGNPLSSRWMGRLPHNVSVVPEIKRFLPPTSAIALSSVELTNGTILTGIESIIFATGFRYTFPFLPQFHNTSLTNHDLEHKPKPIVTDGTHLRNLFLDILSIEEPTLGFMCMNIEIQNFKYAEYIAVALSKIWGNKATIPPVTRLWELNERRVMEKGGYGKYFQFLGFRGEREMIRLFTGWLNDAAASHGGRQVR</sequence>
<keyword id="KW-0274">FAD</keyword>
<keyword id="KW-0285">Flavoprotein</keyword>
<keyword id="KW-0325">Glycoprotein</keyword>
<keyword id="KW-0503">Monooxygenase</keyword>
<keyword id="KW-0521">NADP</keyword>
<keyword id="KW-0560">Oxidoreductase</keyword>
<keyword id="KW-1185">Reference proteome</keyword>
<keyword id="KW-0732">Signal</keyword>
<feature type="signal peptide" evidence="1">
    <location>
        <begin position="1"/>
        <end position="24"/>
    </location>
</feature>
<feature type="chain" id="PRO_5002173634" description="Flavin-containing monooxygenase iboF">
    <location>
        <begin position="25"/>
        <end position="535"/>
    </location>
</feature>
<feature type="binding site" evidence="1">
    <location>
        <begin position="60"/>
        <end position="65"/>
    </location>
    <ligand>
        <name>FAD</name>
        <dbReference type="ChEBI" id="CHEBI:57692"/>
    </ligand>
</feature>
<feature type="binding site" evidence="1">
    <location>
        <begin position="307"/>
        <end position="312"/>
    </location>
    <ligand>
        <name>NADP(+)</name>
        <dbReference type="ChEBI" id="CHEBI:58349"/>
    </ligand>
</feature>
<feature type="glycosylation site" description="N-linked (GlcNAc...) asparagine" evidence="2">
    <location>
        <position position="134"/>
    </location>
</feature>
<feature type="glycosylation site" description="N-linked (GlcNAc...) asparagine" evidence="2">
    <location>
        <position position="243"/>
    </location>
</feature>
<feature type="glycosylation site" description="N-linked (GlcNAc...) asparagine" evidence="2">
    <location>
        <position position="300"/>
    </location>
</feature>
<feature type="glycosylation site" description="N-linked (GlcNAc...) asparagine" evidence="2">
    <location>
        <position position="356"/>
    </location>
</feature>
<feature type="glycosylation site" description="N-linked (GlcNAc...) asparagine" evidence="2">
    <location>
        <position position="382"/>
    </location>
</feature>
<feature type="glycosylation site" description="N-linked (GlcNAc...) asparagine" evidence="2">
    <location>
        <position position="410"/>
    </location>
</feature>
<evidence type="ECO:0000255" key="1"/>
<evidence type="ECO:0000255" key="2">
    <source>
        <dbReference type="PROSITE-ProRule" id="PRU00498"/>
    </source>
</evidence>
<evidence type="ECO:0000269" key="3">
    <source>
    </source>
</evidence>
<evidence type="ECO:0000303" key="4">
    <source>
    </source>
</evidence>
<evidence type="ECO:0000305" key="5"/>
<evidence type="ECO:0000305" key="6">
    <source>
    </source>
</evidence>
<proteinExistence type="evidence at transcript level"/>
<organism>
    <name type="scientific">Amanita muscaria (strain Koide BX008)</name>
    <dbReference type="NCBI Taxonomy" id="946122"/>
    <lineage>
        <taxon>Eukaryota</taxon>
        <taxon>Fungi</taxon>
        <taxon>Dikarya</taxon>
        <taxon>Basidiomycota</taxon>
        <taxon>Agaricomycotina</taxon>
        <taxon>Agaricomycetes</taxon>
        <taxon>Agaricomycetidae</taxon>
        <taxon>Agaricales</taxon>
        <taxon>Pluteineae</taxon>
        <taxon>Amanitaceae</taxon>
        <taxon>Amanita</taxon>
    </lineage>
</organism>
<gene>
    <name evidence="4" type="primary">iboF</name>
    <name type="ORF">M378DRAFT_88862</name>
</gene>